<organism>
    <name type="scientific">Synechococcus sp. (strain ATCC 27144 / PCC 6301 / SAUG 1402/1)</name>
    <name type="common">Anacystis nidulans</name>
    <dbReference type="NCBI Taxonomy" id="269084"/>
    <lineage>
        <taxon>Bacteria</taxon>
        <taxon>Bacillati</taxon>
        <taxon>Cyanobacteriota</taxon>
        <taxon>Cyanophyceae</taxon>
        <taxon>Synechococcales</taxon>
        <taxon>Synechococcaceae</taxon>
        <taxon>Synechococcus</taxon>
    </lineage>
</organism>
<dbReference type="EC" id="6.1.1.6" evidence="1"/>
<dbReference type="EMBL" id="AP008231">
    <property type="protein sequence ID" value="BAD79881.1"/>
    <property type="molecule type" value="Genomic_DNA"/>
</dbReference>
<dbReference type="RefSeq" id="WP_011244001.1">
    <property type="nucleotide sequence ID" value="NZ_CP085785.1"/>
</dbReference>
<dbReference type="SMR" id="Q5N1D9"/>
<dbReference type="GeneID" id="72431304"/>
<dbReference type="KEGG" id="syc:syc1691_d"/>
<dbReference type="eggNOG" id="COG1190">
    <property type="taxonomic scope" value="Bacteria"/>
</dbReference>
<dbReference type="Proteomes" id="UP000001175">
    <property type="component" value="Chromosome"/>
</dbReference>
<dbReference type="GO" id="GO:0005829">
    <property type="term" value="C:cytosol"/>
    <property type="evidence" value="ECO:0007669"/>
    <property type="project" value="TreeGrafter"/>
</dbReference>
<dbReference type="GO" id="GO:0005524">
    <property type="term" value="F:ATP binding"/>
    <property type="evidence" value="ECO:0007669"/>
    <property type="project" value="UniProtKB-UniRule"/>
</dbReference>
<dbReference type="GO" id="GO:0004824">
    <property type="term" value="F:lysine-tRNA ligase activity"/>
    <property type="evidence" value="ECO:0007669"/>
    <property type="project" value="UniProtKB-UniRule"/>
</dbReference>
<dbReference type="GO" id="GO:0000287">
    <property type="term" value="F:magnesium ion binding"/>
    <property type="evidence" value="ECO:0007669"/>
    <property type="project" value="UniProtKB-UniRule"/>
</dbReference>
<dbReference type="GO" id="GO:0000049">
    <property type="term" value="F:tRNA binding"/>
    <property type="evidence" value="ECO:0007669"/>
    <property type="project" value="TreeGrafter"/>
</dbReference>
<dbReference type="GO" id="GO:0006430">
    <property type="term" value="P:lysyl-tRNA aminoacylation"/>
    <property type="evidence" value="ECO:0007669"/>
    <property type="project" value="UniProtKB-UniRule"/>
</dbReference>
<dbReference type="CDD" id="cd00775">
    <property type="entry name" value="LysRS_core"/>
    <property type="match status" value="1"/>
</dbReference>
<dbReference type="CDD" id="cd04322">
    <property type="entry name" value="LysRS_N"/>
    <property type="match status" value="1"/>
</dbReference>
<dbReference type="FunFam" id="2.40.50.140:FF:000024">
    <property type="entry name" value="Lysine--tRNA ligase"/>
    <property type="match status" value="1"/>
</dbReference>
<dbReference type="FunFam" id="3.30.930.10:FF:000067">
    <property type="entry name" value="Lysine--tRNA ligase"/>
    <property type="match status" value="1"/>
</dbReference>
<dbReference type="Gene3D" id="3.30.930.10">
    <property type="entry name" value="Bira Bifunctional Protein, Domain 2"/>
    <property type="match status" value="1"/>
</dbReference>
<dbReference type="Gene3D" id="2.40.50.140">
    <property type="entry name" value="Nucleic acid-binding proteins"/>
    <property type="match status" value="1"/>
</dbReference>
<dbReference type="HAMAP" id="MF_00252">
    <property type="entry name" value="Lys_tRNA_synth_class2"/>
    <property type="match status" value="1"/>
</dbReference>
<dbReference type="InterPro" id="IPR004364">
    <property type="entry name" value="Aa-tRNA-synt_II"/>
</dbReference>
<dbReference type="InterPro" id="IPR006195">
    <property type="entry name" value="aa-tRNA-synth_II"/>
</dbReference>
<dbReference type="InterPro" id="IPR045864">
    <property type="entry name" value="aa-tRNA-synth_II/BPL/LPL"/>
</dbReference>
<dbReference type="InterPro" id="IPR002313">
    <property type="entry name" value="Lys-tRNA-ligase_II"/>
</dbReference>
<dbReference type="InterPro" id="IPR034762">
    <property type="entry name" value="Lys-tRNA-ligase_II_bac/euk"/>
</dbReference>
<dbReference type="InterPro" id="IPR044136">
    <property type="entry name" value="Lys-tRNA-ligase_II_N"/>
</dbReference>
<dbReference type="InterPro" id="IPR018149">
    <property type="entry name" value="Lys-tRNA-synth_II_C"/>
</dbReference>
<dbReference type="InterPro" id="IPR012340">
    <property type="entry name" value="NA-bd_OB-fold"/>
</dbReference>
<dbReference type="InterPro" id="IPR004365">
    <property type="entry name" value="NA-bd_OB_tRNA"/>
</dbReference>
<dbReference type="NCBIfam" id="TIGR00499">
    <property type="entry name" value="lysS_bact"/>
    <property type="match status" value="1"/>
</dbReference>
<dbReference type="NCBIfam" id="NF001756">
    <property type="entry name" value="PRK00484.1"/>
    <property type="match status" value="1"/>
</dbReference>
<dbReference type="PANTHER" id="PTHR42918:SF15">
    <property type="entry name" value="LYSINE--TRNA LIGASE, CHLOROPLASTIC_MITOCHONDRIAL"/>
    <property type="match status" value="1"/>
</dbReference>
<dbReference type="PANTHER" id="PTHR42918">
    <property type="entry name" value="LYSYL-TRNA SYNTHETASE"/>
    <property type="match status" value="1"/>
</dbReference>
<dbReference type="Pfam" id="PF00152">
    <property type="entry name" value="tRNA-synt_2"/>
    <property type="match status" value="1"/>
</dbReference>
<dbReference type="Pfam" id="PF01336">
    <property type="entry name" value="tRNA_anti-codon"/>
    <property type="match status" value="1"/>
</dbReference>
<dbReference type="PIRSF" id="PIRSF039101">
    <property type="entry name" value="LysRS2"/>
    <property type="match status" value="1"/>
</dbReference>
<dbReference type="PRINTS" id="PR00982">
    <property type="entry name" value="TRNASYNTHLYS"/>
</dbReference>
<dbReference type="SUPFAM" id="SSF55681">
    <property type="entry name" value="Class II aaRS and biotin synthetases"/>
    <property type="match status" value="1"/>
</dbReference>
<dbReference type="SUPFAM" id="SSF50249">
    <property type="entry name" value="Nucleic acid-binding proteins"/>
    <property type="match status" value="1"/>
</dbReference>
<dbReference type="PROSITE" id="PS50862">
    <property type="entry name" value="AA_TRNA_LIGASE_II"/>
    <property type="match status" value="1"/>
</dbReference>
<evidence type="ECO:0000255" key="1">
    <source>
        <dbReference type="HAMAP-Rule" id="MF_00252"/>
    </source>
</evidence>
<comment type="catalytic activity">
    <reaction evidence="1">
        <text>tRNA(Lys) + L-lysine + ATP = L-lysyl-tRNA(Lys) + AMP + diphosphate</text>
        <dbReference type="Rhea" id="RHEA:20792"/>
        <dbReference type="Rhea" id="RHEA-COMP:9696"/>
        <dbReference type="Rhea" id="RHEA-COMP:9697"/>
        <dbReference type="ChEBI" id="CHEBI:30616"/>
        <dbReference type="ChEBI" id="CHEBI:32551"/>
        <dbReference type="ChEBI" id="CHEBI:33019"/>
        <dbReference type="ChEBI" id="CHEBI:78442"/>
        <dbReference type="ChEBI" id="CHEBI:78529"/>
        <dbReference type="ChEBI" id="CHEBI:456215"/>
        <dbReference type="EC" id="6.1.1.6"/>
    </reaction>
</comment>
<comment type="cofactor">
    <cofactor evidence="1">
        <name>Mg(2+)</name>
        <dbReference type="ChEBI" id="CHEBI:18420"/>
    </cofactor>
    <text evidence="1">Binds 3 Mg(2+) ions per subunit.</text>
</comment>
<comment type="subunit">
    <text evidence="1">Homodimer.</text>
</comment>
<comment type="subcellular location">
    <subcellularLocation>
        <location evidence="1">Cytoplasm</location>
    </subcellularLocation>
</comment>
<comment type="similarity">
    <text evidence="1">Belongs to the class-II aminoacyl-tRNA synthetase family.</text>
</comment>
<gene>
    <name evidence="1" type="primary">lysS</name>
    <name type="ordered locus">syc1691_d</name>
</gene>
<feature type="chain" id="PRO_1000059044" description="Lysine--tRNA ligase">
    <location>
        <begin position="1"/>
        <end position="504"/>
    </location>
</feature>
<feature type="binding site" evidence="1">
    <location>
        <position position="407"/>
    </location>
    <ligand>
        <name>Mg(2+)</name>
        <dbReference type="ChEBI" id="CHEBI:18420"/>
        <label>1</label>
    </ligand>
</feature>
<feature type="binding site" evidence="1">
    <location>
        <position position="414"/>
    </location>
    <ligand>
        <name>Mg(2+)</name>
        <dbReference type="ChEBI" id="CHEBI:18420"/>
        <label>1</label>
    </ligand>
</feature>
<feature type="binding site" evidence="1">
    <location>
        <position position="414"/>
    </location>
    <ligand>
        <name>Mg(2+)</name>
        <dbReference type="ChEBI" id="CHEBI:18420"/>
        <label>2</label>
    </ligand>
</feature>
<reference key="1">
    <citation type="journal article" date="2007" name="Photosyn. Res.">
        <title>Complete nucleotide sequence of the freshwater unicellular cyanobacterium Synechococcus elongatus PCC 6301 chromosome: gene content and organization.</title>
        <authorList>
            <person name="Sugita C."/>
            <person name="Ogata K."/>
            <person name="Shikata M."/>
            <person name="Jikuya H."/>
            <person name="Takano J."/>
            <person name="Furumichi M."/>
            <person name="Kanehisa M."/>
            <person name="Omata T."/>
            <person name="Sugiura M."/>
            <person name="Sugita M."/>
        </authorList>
    </citation>
    <scope>NUCLEOTIDE SEQUENCE [LARGE SCALE GENOMIC DNA]</scope>
    <source>
        <strain>ATCC 27144 / PCC 6301 / SAUG 1402/1</strain>
    </source>
</reference>
<name>SYK_SYNP6</name>
<protein>
    <recommendedName>
        <fullName evidence="1">Lysine--tRNA ligase</fullName>
        <ecNumber evidence="1">6.1.1.6</ecNumber>
    </recommendedName>
    <alternativeName>
        <fullName evidence="1">Lysyl-tRNA synthetase</fullName>
        <shortName evidence="1">LysRS</shortName>
    </alternativeName>
</protein>
<proteinExistence type="inferred from homology"/>
<keyword id="KW-0030">Aminoacyl-tRNA synthetase</keyword>
<keyword id="KW-0067">ATP-binding</keyword>
<keyword id="KW-0963">Cytoplasm</keyword>
<keyword id="KW-0436">Ligase</keyword>
<keyword id="KW-0460">Magnesium</keyword>
<keyword id="KW-0479">Metal-binding</keyword>
<keyword id="KW-0547">Nucleotide-binding</keyword>
<keyword id="KW-0648">Protein biosynthesis</keyword>
<accession>Q5N1D9</accession>
<sequence>MSDLRATRLEKALQLRELGFEPYAYRWDCSHSAAQLQALYADLPAGEEVAVEVAIAGRIMARRVFGKLAFFTLQDESGQIQLYLEKQRLSESMAAIDAEAFSHLKALTDVGDILGVKGSVRRTEKGELSIAVDQYAILTKSLQPLPDKWHGLTDVEKRYRQRYVDLIVNPEVRETFRRRAKITAAIRRHLEDQGFIEIETPVLQAEAGGAEARPFITYHNTLELDLYLRIATELHLKRLIVGGFEKVFELGRIFRNEGISTRHNPEFTSIEVYQAYADYEDMMRLTETLIAQVAEQVVGSLQVPYQGQTIDLAPPWKRATMAELVLAATGIDFESLKDLEAGIAAVKAAGIPVPEDCPNLGKLLNHCFEEKVEATLIQPTFVIDYPVEISPLAKPHRSKPGLVERFELFIVGRETANSFSELTDPVDQRQRLEAQAADKAAGNVEANDVDEDFLLALEHGMPPTGGLGIGIDRLVMLLTDSPSIRDVIAFPLLRPEASSEEAEA</sequence>